<protein>
    <recommendedName>
        <fullName evidence="1">Ribonuclease P protein component 4</fullName>
        <shortName evidence="1">RNase P component 4</shortName>
        <ecNumber evidence="1">3.1.26.5</ecNumber>
    </recommendedName>
    <alternativeName>
        <fullName evidence="1">Rpp21</fullName>
    </alternativeName>
</protein>
<sequence length="104" mass="12608">MRIKNKIKKRIIELIELAYITARKGDLELAREYIKLAEMYSRKGRVKIPLKYKRMFCRKCYTPLITGVTERRRIRSKILIRTCLICNWQRRYVLSRNKGSNKEN</sequence>
<accession>C4KJF8</accession>
<evidence type="ECO:0000255" key="1">
    <source>
        <dbReference type="HAMAP-Rule" id="MF_00757"/>
    </source>
</evidence>
<gene>
    <name evidence="1" type="primary">rnp4</name>
    <name type="ordered locus">M164_0042</name>
</gene>
<reference key="1">
    <citation type="journal article" date="2009" name="Proc. Natl. Acad. Sci. U.S.A.">
        <title>Biogeography of the Sulfolobus islandicus pan-genome.</title>
        <authorList>
            <person name="Reno M.L."/>
            <person name="Held N.L."/>
            <person name="Fields C.J."/>
            <person name="Burke P.V."/>
            <person name="Whitaker R.J."/>
        </authorList>
    </citation>
    <scope>NUCLEOTIDE SEQUENCE [LARGE SCALE GENOMIC DNA]</scope>
    <source>
        <strain>M.16.4 / Kamchatka #3</strain>
    </source>
</reference>
<proteinExistence type="inferred from homology"/>
<feature type="chain" id="PRO_1000212863" description="Ribonuclease P protein component 4">
    <location>
        <begin position="1"/>
        <end position="104"/>
    </location>
</feature>
<feature type="binding site" evidence="1">
    <location>
        <position position="57"/>
    </location>
    <ligand>
        <name>Zn(2+)</name>
        <dbReference type="ChEBI" id="CHEBI:29105"/>
    </ligand>
</feature>
<feature type="binding site" evidence="1">
    <location>
        <position position="60"/>
    </location>
    <ligand>
        <name>Zn(2+)</name>
        <dbReference type="ChEBI" id="CHEBI:29105"/>
    </ligand>
</feature>
<feature type="binding site" evidence="1">
    <location>
        <position position="83"/>
    </location>
    <ligand>
        <name>Zn(2+)</name>
        <dbReference type="ChEBI" id="CHEBI:29105"/>
    </ligand>
</feature>
<feature type="binding site" evidence="1">
    <location>
        <position position="86"/>
    </location>
    <ligand>
        <name>Zn(2+)</name>
        <dbReference type="ChEBI" id="CHEBI:29105"/>
    </ligand>
</feature>
<name>RNP4_SACI6</name>
<organism>
    <name type="scientific">Saccharolobus islandicus (strain M.16.4 / Kamchatka #3)</name>
    <name type="common">Sulfolobus islandicus</name>
    <dbReference type="NCBI Taxonomy" id="426118"/>
    <lineage>
        <taxon>Archaea</taxon>
        <taxon>Thermoproteota</taxon>
        <taxon>Thermoprotei</taxon>
        <taxon>Sulfolobales</taxon>
        <taxon>Sulfolobaceae</taxon>
        <taxon>Saccharolobus</taxon>
    </lineage>
</organism>
<comment type="function">
    <text evidence="1">Part of ribonuclease P, a protein complex that generates mature tRNA molecules by cleaving their 5'-ends.</text>
</comment>
<comment type="catalytic activity">
    <reaction evidence="1">
        <text>Endonucleolytic cleavage of RNA, removing 5'-extranucleotides from tRNA precursor.</text>
        <dbReference type="EC" id="3.1.26.5"/>
    </reaction>
</comment>
<comment type="cofactor">
    <cofactor evidence="1">
        <name>Zn(2+)</name>
        <dbReference type="ChEBI" id="CHEBI:29105"/>
    </cofactor>
    <text evidence="1">Binds 1 zinc ion per subunit.</text>
</comment>
<comment type="subunit">
    <text evidence="1">Consists of a catalytic RNA component and at least 4-5 protein subunits.</text>
</comment>
<comment type="subcellular location">
    <subcellularLocation>
        <location evidence="1">Cytoplasm</location>
    </subcellularLocation>
</comment>
<comment type="similarity">
    <text evidence="1">Belongs to the eukaryotic/archaeal RNase P protein component 4 family.</text>
</comment>
<dbReference type="EC" id="3.1.26.5" evidence="1"/>
<dbReference type="EMBL" id="CP001402">
    <property type="protein sequence ID" value="ACR40678.1"/>
    <property type="molecule type" value="Genomic_DNA"/>
</dbReference>
<dbReference type="RefSeq" id="WP_012710221.1">
    <property type="nucleotide sequence ID" value="NC_012726.1"/>
</dbReference>
<dbReference type="SMR" id="C4KJF8"/>
<dbReference type="GeneID" id="87023336"/>
<dbReference type="KEGG" id="sid:M164_0042"/>
<dbReference type="HOGENOM" id="CLU_079140_3_1_2"/>
<dbReference type="Proteomes" id="UP000001479">
    <property type="component" value="Chromosome"/>
</dbReference>
<dbReference type="GO" id="GO:0005737">
    <property type="term" value="C:cytoplasm"/>
    <property type="evidence" value="ECO:0007669"/>
    <property type="project" value="UniProtKB-SubCell"/>
</dbReference>
<dbReference type="GO" id="GO:0030677">
    <property type="term" value="C:ribonuclease P complex"/>
    <property type="evidence" value="ECO:0007669"/>
    <property type="project" value="UniProtKB-UniRule"/>
</dbReference>
<dbReference type="GO" id="GO:0004526">
    <property type="term" value="F:ribonuclease P activity"/>
    <property type="evidence" value="ECO:0007669"/>
    <property type="project" value="UniProtKB-UniRule"/>
</dbReference>
<dbReference type="GO" id="GO:0008270">
    <property type="term" value="F:zinc ion binding"/>
    <property type="evidence" value="ECO:0007669"/>
    <property type="project" value="UniProtKB-UniRule"/>
</dbReference>
<dbReference type="GO" id="GO:0001682">
    <property type="term" value="P:tRNA 5'-leader removal"/>
    <property type="evidence" value="ECO:0007669"/>
    <property type="project" value="UniProtKB-UniRule"/>
</dbReference>
<dbReference type="Gene3D" id="6.20.50.20">
    <property type="match status" value="1"/>
</dbReference>
<dbReference type="Gene3D" id="1.20.5.420">
    <property type="entry name" value="Immunoglobulin FC, subunit C"/>
    <property type="match status" value="1"/>
</dbReference>
<dbReference type="HAMAP" id="MF_00757">
    <property type="entry name" value="RNase_P_4"/>
    <property type="match status" value="1"/>
</dbReference>
<dbReference type="InterPro" id="IPR016432">
    <property type="entry name" value="RNP4"/>
</dbReference>
<dbReference type="InterPro" id="IPR007175">
    <property type="entry name" value="Rpr2/Snm1/Rpp21"/>
</dbReference>
<dbReference type="PANTHER" id="PTHR14742:SF0">
    <property type="entry name" value="RIBONUCLEASE P PROTEIN SUBUNIT P21"/>
    <property type="match status" value="1"/>
</dbReference>
<dbReference type="PANTHER" id="PTHR14742">
    <property type="entry name" value="RIBONUCLEASE P SUBUNIT P21"/>
    <property type="match status" value="1"/>
</dbReference>
<dbReference type="Pfam" id="PF04032">
    <property type="entry name" value="Rpr2"/>
    <property type="match status" value="1"/>
</dbReference>
<dbReference type="PIRSF" id="PIRSF004878">
    <property type="entry name" value="RNase_P_4"/>
    <property type="match status" value="1"/>
</dbReference>
<keyword id="KW-0963">Cytoplasm</keyword>
<keyword id="KW-0255">Endonuclease</keyword>
<keyword id="KW-0378">Hydrolase</keyword>
<keyword id="KW-0479">Metal-binding</keyword>
<keyword id="KW-0540">Nuclease</keyword>
<keyword id="KW-0819">tRNA processing</keyword>
<keyword id="KW-0862">Zinc</keyword>